<organism>
    <name type="scientific">Pectobacterium atrosepticum (strain SCRI 1043 / ATCC BAA-672)</name>
    <name type="common">Erwinia carotovora subsp. atroseptica</name>
    <dbReference type="NCBI Taxonomy" id="218491"/>
    <lineage>
        <taxon>Bacteria</taxon>
        <taxon>Pseudomonadati</taxon>
        <taxon>Pseudomonadota</taxon>
        <taxon>Gammaproteobacteria</taxon>
        <taxon>Enterobacterales</taxon>
        <taxon>Pectobacteriaceae</taxon>
        <taxon>Pectobacterium</taxon>
    </lineage>
</organism>
<evidence type="ECO:0000255" key="1">
    <source>
        <dbReference type="HAMAP-Rule" id="MF_01683"/>
    </source>
</evidence>
<feature type="chain" id="PRO_0000357341" description="Methylthioribose kinase">
    <location>
        <begin position="1"/>
        <end position="400"/>
    </location>
</feature>
<feature type="binding site" evidence="1">
    <location>
        <position position="40"/>
    </location>
    <ligand>
        <name>ATP</name>
        <dbReference type="ChEBI" id="CHEBI:30616"/>
    </ligand>
</feature>
<feature type="binding site" evidence="1">
    <location>
        <position position="57"/>
    </location>
    <ligand>
        <name>ATP</name>
        <dbReference type="ChEBI" id="CHEBI:30616"/>
    </ligand>
</feature>
<feature type="binding site" evidence="1">
    <location>
        <begin position="111"/>
        <end position="113"/>
    </location>
    <ligand>
        <name>ATP</name>
        <dbReference type="ChEBI" id="CHEBI:30616"/>
    </ligand>
</feature>
<feature type="binding site" evidence="1">
    <location>
        <position position="229"/>
    </location>
    <ligand>
        <name>substrate</name>
    </ligand>
</feature>
<feature type="binding site" evidence="1">
    <location>
        <begin position="246"/>
        <end position="248"/>
    </location>
    <ligand>
        <name>ATP</name>
        <dbReference type="ChEBI" id="CHEBI:30616"/>
    </ligand>
</feature>
<feature type="binding site" evidence="1">
    <location>
        <position position="344"/>
    </location>
    <ligand>
        <name>substrate</name>
    </ligand>
</feature>
<dbReference type="EC" id="2.7.1.100" evidence="1"/>
<dbReference type="EMBL" id="BX950851">
    <property type="protein sequence ID" value="CAG76375.1"/>
    <property type="molecule type" value="Genomic_DNA"/>
</dbReference>
<dbReference type="RefSeq" id="WP_011094983.1">
    <property type="nucleotide sequence ID" value="NC_004547.2"/>
</dbReference>
<dbReference type="SMR" id="Q6D1H0"/>
<dbReference type="STRING" id="218491.ECA3476"/>
<dbReference type="GeneID" id="57210145"/>
<dbReference type="KEGG" id="eca:ECA3476"/>
<dbReference type="PATRIC" id="fig|218491.5.peg.3518"/>
<dbReference type="eggNOG" id="COG4857">
    <property type="taxonomic scope" value="Bacteria"/>
</dbReference>
<dbReference type="HOGENOM" id="CLU_033681_0_0_6"/>
<dbReference type="OrthoDB" id="9777791at2"/>
<dbReference type="UniPathway" id="UPA00904">
    <property type="reaction ID" value="UER00872"/>
</dbReference>
<dbReference type="Proteomes" id="UP000007966">
    <property type="component" value="Chromosome"/>
</dbReference>
<dbReference type="GO" id="GO:0005524">
    <property type="term" value="F:ATP binding"/>
    <property type="evidence" value="ECO:0007669"/>
    <property type="project" value="UniProtKB-UniRule"/>
</dbReference>
<dbReference type="GO" id="GO:0046522">
    <property type="term" value="F:S-methyl-5-thioribose kinase activity"/>
    <property type="evidence" value="ECO:0007669"/>
    <property type="project" value="UniProtKB-UniRule"/>
</dbReference>
<dbReference type="GO" id="GO:0019509">
    <property type="term" value="P:L-methionine salvage from methylthioadenosine"/>
    <property type="evidence" value="ECO:0007669"/>
    <property type="project" value="UniProtKB-UniRule"/>
</dbReference>
<dbReference type="Gene3D" id="3.90.1200.10">
    <property type="match status" value="1"/>
</dbReference>
<dbReference type="Gene3D" id="3.30.200.20">
    <property type="entry name" value="Phosphorylase Kinase, domain 1"/>
    <property type="match status" value="1"/>
</dbReference>
<dbReference type="HAMAP" id="MF_01683">
    <property type="entry name" value="Salvage_MtnK"/>
    <property type="match status" value="1"/>
</dbReference>
<dbReference type="InterPro" id="IPR002575">
    <property type="entry name" value="Aminoglycoside_PTrfase"/>
</dbReference>
<dbReference type="InterPro" id="IPR011009">
    <property type="entry name" value="Kinase-like_dom_sf"/>
</dbReference>
<dbReference type="InterPro" id="IPR009212">
    <property type="entry name" value="Methylthioribose_kinase"/>
</dbReference>
<dbReference type="NCBIfam" id="TIGR01767">
    <property type="entry name" value="MTRK"/>
    <property type="match status" value="1"/>
</dbReference>
<dbReference type="PANTHER" id="PTHR34273">
    <property type="entry name" value="METHYLTHIORIBOSE KINASE"/>
    <property type="match status" value="1"/>
</dbReference>
<dbReference type="PANTHER" id="PTHR34273:SF2">
    <property type="entry name" value="METHYLTHIORIBOSE KINASE"/>
    <property type="match status" value="1"/>
</dbReference>
<dbReference type="Pfam" id="PF01636">
    <property type="entry name" value="APH"/>
    <property type="match status" value="1"/>
</dbReference>
<dbReference type="PIRSF" id="PIRSF031134">
    <property type="entry name" value="MTRK"/>
    <property type="match status" value="1"/>
</dbReference>
<dbReference type="SUPFAM" id="SSF56112">
    <property type="entry name" value="Protein kinase-like (PK-like)"/>
    <property type="match status" value="1"/>
</dbReference>
<gene>
    <name evidence="1" type="primary">mtnK</name>
    <name type="ordered locus">ECA3476</name>
</gene>
<sequence>MSLYRTFTADDAVEYARQYGGVSQPQTLVTAEEIGDGNLNLVFKIKDEAGISRVIVKQALPYVRCVGESWPLTLDRARIEAETLLTHARFCPQHTVTVLYHDPELAVMVQEDLSDHRIWRSELVRGADYPQAAAQLGEYLAQTLFHTSDFYQHPHEKKAAVSQFTNPELCEITEDLFFTDPYIDHERNQFDAALTPDVQTLRDDRALKLAVAGLKHRFLSKAEALLHGDIHSGSIFVAEGRLKVIDAEFGFYGPMGFDIGTAIGNLLLNYCGLPGLLAPREAAAGRERRLEDIRTLWQTFSARFLALSESDCREPALAESGYAALFLQQVWLDAIGFCGTELIRRTIGLAHVVDLDSIQETDARLACQRHVLSLGRTLVLAAPHIADVDALLARVRQSGA</sequence>
<accession>Q6D1H0</accession>
<comment type="function">
    <text evidence="1">Catalyzes the phosphorylation of methylthioribose into methylthioribose-1-phosphate.</text>
</comment>
<comment type="catalytic activity">
    <reaction evidence="1">
        <text>5-(methylsulfanyl)-D-ribose + ATP = 5-(methylsulfanyl)-alpha-D-ribose 1-phosphate + ADP + H(+)</text>
        <dbReference type="Rhea" id="RHEA:22312"/>
        <dbReference type="ChEBI" id="CHEBI:15378"/>
        <dbReference type="ChEBI" id="CHEBI:30616"/>
        <dbReference type="ChEBI" id="CHEBI:58533"/>
        <dbReference type="ChEBI" id="CHEBI:78440"/>
        <dbReference type="ChEBI" id="CHEBI:456216"/>
        <dbReference type="EC" id="2.7.1.100"/>
    </reaction>
</comment>
<comment type="pathway">
    <text evidence="1">Amino-acid biosynthesis; L-methionine biosynthesis via salvage pathway; S-methyl-5-thio-alpha-D-ribose 1-phosphate from S-methyl-5'-thioadenosine (hydrolase route): step 2/2.</text>
</comment>
<comment type="subunit">
    <text evidence="1">Homodimer.</text>
</comment>
<comment type="similarity">
    <text evidence="1">Belongs to the methylthioribose kinase family.</text>
</comment>
<name>MTNK_PECAS</name>
<proteinExistence type="inferred from homology"/>
<keyword id="KW-0028">Amino-acid biosynthesis</keyword>
<keyword id="KW-0067">ATP-binding</keyword>
<keyword id="KW-0418">Kinase</keyword>
<keyword id="KW-0486">Methionine biosynthesis</keyword>
<keyword id="KW-0547">Nucleotide-binding</keyword>
<keyword id="KW-1185">Reference proteome</keyword>
<keyword id="KW-0808">Transferase</keyword>
<reference key="1">
    <citation type="journal article" date="2004" name="Proc. Natl. Acad. Sci. U.S.A.">
        <title>Genome sequence of the enterobacterial phytopathogen Erwinia carotovora subsp. atroseptica and characterization of virulence factors.</title>
        <authorList>
            <person name="Bell K.S."/>
            <person name="Sebaihia M."/>
            <person name="Pritchard L."/>
            <person name="Holden M.T.G."/>
            <person name="Hyman L.J."/>
            <person name="Holeva M.C."/>
            <person name="Thomson N.R."/>
            <person name="Bentley S.D."/>
            <person name="Churcher L.J.C."/>
            <person name="Mungall K."/>
            <person name="Atkin R."/>
            <person name="Bason N."/>
            <person name="Brooks K."/>
            <person name="Chillingworth T."/>
            <person name="Clark K."/>
            <person name="Doggett J."/>
            <person name="Fraser A."/>
            <person name="Hance Z."/>
            <person name="Hauser H."/>
            <person name="Jagels K."/>
            <person name="Moule S."/>
            <person name="Norbertczak H."/>
            <person name="Ormond D."/>
            <person name="Price C."/>
            <person name="Quail M.A."/>
            <person name="Sanders M."/>
            <person name="Walker D."/>
            <person name="Whitehead S."/>
            <person name="Salmond G.P.C."/>
            <person name="Birch P.R.J."/>
            <person name="Parkhill J."/>
            <person name="Toth I.K."/>
        </authorList>
    </citation>
    <scope>NUCLEOTIDE SEQUENCE [LARGE SCALE GENOMIC DNA]</scope>
    <source>
        <strain>SCRI 1043 / ATCC BAA-672</strain>
    </source>
</reference>
<protein>
    <recommendedName>
        <fullName evidence="1">Methylthioribose kinase</fullName>
        <shortName evidence="1">MTR kinase</shortName>
        <ecNumber evidence="1">2.7.1.100</ecNumber>
    </recommendedName>
</protein>